<accession>O25291</accession>
<keyword id="KW-1003">Cell membrane</keyword>
<keyword id="KW-0472">Membrane</keyword>
<keyword id="KW-1185">Reference proteome</keyword>
<keyword id="KW-0812">Transmembrane</keyword>
<keyword id="KW-1133">Transmembrane helix</keyword>
<keyword id="KW-0813">Transport</keyword>
<evidence type="ECO:0000255" key="1"/>
<evidence type="ECO:0000305" key="2"/>
<dbReference type="EMBL" id="AE000511">
    <property type="protein sequence ID" value="AAD07623.1"/>
    <property type="molecule type" value="Genomic_DNA"/>
</dbReference>
<dbReference type="PIR" id="G64590">
    <property type="entry name" value="G64590"/>
</dbReference>
<dbReference type="RefSeq" id="NP_207362.1">
    <property type="nucleotide sequence ID" value="NC_000915.1"/>
</dbReference>
<dbReference type="RefSeq" id="WP_000647330.1">
    <property type="nucleotide sequence ID" value="NC_018939.1"/>
</dbReference>
<dbReference type="FunCoup" id="O25291">
    <property type="interactions" value="35"/>
</dbReference>
<dbReference type="STRING" id="85962.HP_0567"/>
<dbReference type="PaxDb" id="85962-C694_02925"/>
<dbReference type="EnsemblBacteria" id="AAD07623">
    <property type="protein sequence ID" value="AAD07623"/>
    <property type="gene ID" value="HP_0567"/>
</dbReference>
<dbReference type="KEGG" id="heo:C694_02925"/>
<dbReference type="KEGG" id="hpy:HP_0567"/>
<dbReference type="PATRIC" id="fig|85962.47.peg.612"/>
<dbReference type="eggNOG" id="COG0628">
    <property type="taxonomic scope" value="Bacteria"/>
</dbReference>
<dbReference type="InParanoid" id="O25291"/>
<dbReference type="OrthoDB" id="5348369at2"/>
<dbReference type="PhylomeDB" id="O25291"/>
<dbReference type="Proteomes" id="UP000000429">
    <property type="component" value="Chromosome"/>
</dbReference>
<dbReference type="GO" id="GO:0005886">
    <property type="term" value="C:plasma membrane"/>
    <property type="evidence" value="ECO:0007669"/>
    <property type="project" value="UniProtKB-SubCell"/>
</dbReference>
<dbReference type="InterPro" id="IPR002549">
    <property type="entry name" value="AI-2E-like"/>
</dbReference>
<dbReference type="PANTHER" id="PTHR21716">
    <property type="entry name" value="TRANSMEMBRANE PROTEIN"/>
    <property type="match status" value="1"/>
</dbReference>
<dbReference type="PANTHER" id="PTHR21716:SF4">
    <property type="entry name" value="TRANSMEMBRANE PROTEIN 245"/>
    <property type="match status" value="1"/>
</dbReference>
<dbReference type="Pfam" id="PF01594">
    <property type="entry name" value="AI-2E_transport"/>
    <property type="match status" value="1"/>
</dbReference>
<sequence length="348" mass="39838">MKAQYFFWILFLIGFYWMIYLYQDFLMDALIAGLLCVGFFQVKVFLDKRFFNVVSSFLCVLILASVLIVPLYFIVYKSSNIIFEINFEKFSALIKWLKGIITENLSHFPTIHDGASKFLENFSAASITGYLLKISSYVGRYSLKLITDALFILGLLFFFFYYGERFYRYFLGVLPLGMNQSKKIFEEVAGILRIVLLTSLITVILEGVAFGVMIVWFGHDGWSLGILYGLASLVPAVGGALIWIPIAIYELYHGNVNEAIFIALYSILLISVLIDSVIKPILIVFIKKRIFKTTLKINEMLIFFSMIAGISQFGFWGIIVGPTITAFFIALLRLYENYFIQNEQKACE</sequence>
<organism>
    <name type="scientific">Helicobacter pylori (strain ATCC 700392 / 26695)</name>
    <name type="common">Campylobacter pylori</name>
    <dbReference type="NCBI Taxonomy" id="85962"/>
    <lineage>
        <taxon>Bacteria</taxon>
        <taxon>Pseudomonadati</taxon>
        <taxon>Campylobacterota</taxon>
        <taxon>Epsilonproteobacteria</taxon>
        <taxon>Campylobacterales</taxon>
        <taxon>Helicobacteraceae</taxon>
        <taxon>Helicobacter</taxon>
    </lineage>
</organism>
<protein>
    <recommendedName>
        <fullName>Putative transport protein HP_0567</fullName>
    </recommendedName>
</protein>
<name>Y567_HELPY</name>
<proteinExistence type="inferred from homology"/>
<reference key="1">
    <citation type="journal article" date="1997" name="Nature">
        <title>The complete genome sequence of the gastric pathogen Helicobacter pylori.</title>
        <authorList>
            <person name="Tomb J.-F."/>
            <person name="White O."/>
            <person name="Kerlavage A.R."/>
            <person name="Clayton R.A."/>
            <person name="Sutton G.G."/>
            <person name="Fleischmann R.D."/>
            <person name="Ketchum K.A."/>
            <person name="Klenk H.-P."/>
            <person name="Gill S.R."/>
            <person name="Dougherty B.A."/>
            <person name="Nelson K.E."/>
            <person name="Quackenbush J."/>
            <person name="Zhou L."/>
            <person name="Kirkness E.F."/>
            <person name="Peterson S.N."/>
            <person name="Loftus B.J."/>
            <person name="Richardson D.L."/>
            <person name="Dodson R.J."/>
            <person name="Khalak H.G."/>
            <person name="Glodek A."/>
            <person name="McKenney K."/>
            <person name="FitzGerald L.M."/>
            <person name="Lee N."/>
            <person name="Adams M.D."/>
            <person name="Hickey E.K."/>
            <person name="Berg D.E."/>
            <person name="Gocayne J.D."/>
            <person name="Utterback T.R."/>
            <person name="Peterson J.D."/>
            <person name="Kelley J.M."/>
            <person name="Cotton M.D."/>
            <person name="Weidman J.F."/>
            <person name="Fujii C."/>
            <person name="Bowman C."/>
            <person name="Watthey L."/>
            <person name="Wallin E."/>
            <person name="Hayes W.S."/>
            <person name="Borodovsky M."/>
            <person name="Karp P.D."/>
            <person name="Smith H.O."/>
            <person name="Fraser C.M."/>
            <person name="Venter J.C."/>
        </authorList>
    </citation>
    <scope>NUCLEOTIDE SEQUENCE [LARGE SCALE GENOMIC DNA]</scope>
    <source>
        <strain>ATCC 700392 / 26695</strain>
    </source>
</reference>
<feature type="chain" id="PRO_0000148315" description="Putative transport protein HP_0567">
    <location>
        <begin position="1"/>
        <end position="348"/>
    </location>
</feature>
<feature type="transmembrane region" description="Helical" evidence="1">
    <location>
        <begin position="6"/>
        <end position="26"/>
    </location>
</feature>
<feature type="transmembrane region" description="Helical" evidence="1">
    <location>
        <begin position="27"/>
        <end position="47"/>
    </location>
</feature>
<feature type="transmembrane region" description="Helical" evidence="1">
    <location>
        <begin position="56"/>
        <end position="76"/>
    </location>
</feature>
<feature type="transmembrane region" description="Helical" evidence="1">
    <location>
        <begin position="143"/>
        <end position="163"/>
    </location>
</feature>
<feature type="transmembrane region" description="Helical" evidence="1">
    <location>
        <begin position="194"/>
        <end position="214"/>
    </location>
</feature>
<feature type="transmembrane region" description="Helical" evidence="1">
    <location>
        <begin position="224"/>
        <end position="244"/>
    </location>
</feature>
<feature type="transmembrane region" description="Helical" evidence="1">
    <location>
        <begin position="266"/>
        <end position="286"/>
    </location>
</feature>
<feature type="transmembrane region" description="Helical" evidence="1">
    <location>
        <begin position="300"/>
        <end position="320"/>
    </location>
</feature>
<comment type="subcellular location">
    <subcellularLocation>
        <location evidence="2">Cell membrane</location>
        <topology evidence="2">Multi-pass membrane protein</topology>
    </subcellularLocation>
</comment>
<comment type="similarity">
    <text evidence="2">Belongs to the autoinducer-2 exporter (AI-2E) (TC 2.A.86) family.</text>
</comment>
<gene>
    <name type="ordered locus">HP_0567</name>
</gene>